<feature type="chain" id="PRO_0000269352" description="Large ribosomal subunit protein bL21">
    <location>
        <begin position="1"/>
        <end position="103"/>
    </location>
</feature>
<sequence length="103" mass="11660">MYAVIKTGGKQYRVENGLKLKIEQVPVEIGSELLIDQVLMVADGDNISLGKPLVSGASVKATVLEQGRHDKVRIFKMRRRKHYRKQQGHRQNYTEIQITGISV</sequence>
<name>RL21_NITMU</name>
<proteinExistence type="inferred from homology"/>
<accession>Q2Y809</accession>
<gene>
    <name evidence="1" type="primary">rplU</name>
    <name type="ordered locus">Nmul_A1815</name>
</gene>
<evidence type="ECO:0000255" key="1">
    <source>
        <dbReference type="HAMAP-Rule" id="MF_01363"/>
    </source>
</evidence>
<evidence type="ECO:0000305" key="2"/>
<keyword id="KW-1185">Reference proteome</keyword>
<keyword id="KW-0687">Ribonucleoprotein</keyword>
<keyword id="KW-0689">Ribosomal protein</keyword>
<keyword id="KW-0694">RNA-binding</keyword>
<keyword id="KW-0699">rRNA-binding</keyword>
<dbReference type="EMBL" id="CP000103">
    <property type="protein sequence ID" value="ABB75112.1"/>
    <property type="molecule type" value="Genomic_DNA"/>
</dbReference>
<dbReference type="RefSeq" id="WP_011381132.1">
    <property type="nucleotide sequence ID" value="NC_007614.1"/>
</dbReference>
<dbReference type="SMR" id="Q2Y809"/>
<dbReference type="STRING" id="323848.Nmul_A1815"/>
<dbReference type="KEGG" id="nmu:Nmul_A1815"/>
<dbReference type="eggNOG" id="COG0261">
    <property type="taxonomic scope" value="Bacteria"/>
</dbReference>
<dbReference type="HOGENOM" id="CLU_061463_3_2_4"/>
<dbReference type="OrthoDB" id="9813334at2"/>
<dbReference type="Proteomes" id="UP000002718">
    <property type="component" value="Chromosome"/>
</dbReference>
<dbReference type="GO" id="GO:0005737">
    <property type="term" value="C:cytoplasm"/>
    <property type="evidence" value="ECO:0007669"/>
    <property type="project" value="UniProtKB-ARBA"/>
</dbReference>
<dbReference type="GO" id="GO:1990904">
    <property type="term" value="C:ribonucleoprotein complex"/>
    <property type="evidence" value="ECO:0007669"/>
    <property type="project" value="UniProtKB-KW"/>
</dbReference>
<dbReference type="GO" id="GO:0005840">
    <property type="term" value="C:ribosome"/>
    <property type="evidence" value="ECO:0007669"/>
    <property type="project" value="UniProtKB-KW"/>
</dbReference>
<dbReference type="GO" id="GO:0019843">
    <property type="term" value="F:rRNA binding"/>
    <property type="evidence" value="ECO:0007669"/>
    <property type="project" value="UniProtKB-UniRule"/>
</dbReference>
<dbReference type="GO" id="GO:0003735">
    <property type="term" value="F:structural constituent of ribosome"/>
    <property type="evidence" value="ECO:0007669"/>
    <property type="project" value="InterPro"/>
</dbReference>
<dbReference type="GO" id="GO:0006412">
    <property type="term" value="P:translation"/>
    <property type="evidence" value="ECO:0007669"/>
    <property type="project" value="UniProtKB-UniRule"/>
</dbReference>
<dbReference type="HAMAP" id="MF_01363">
    <property type="entry name" value="Ribosomal_bL21"/>
    <property type="match status" value="1"/>
</dbReference>
<dbReference type="InterPro" id="IPR028909">
    <property type="entry name" value="bL21-like"/>
</dbReference>
<dbReference type="InterPro" id="IPR036164">
    <property type="entry name" value="bL21-like_sf"/>
</dbReference>
<dbReference type="InterPro" id="IPR001787">
    <property type="entry name" value="Ribosomal_bL21"/>
</dbReference>
<dbReference type="InterPro" id="IPR018258">
    <property type="entry name" value="Ribosomal_bL21_CS"/>
</dbReference>
<dbReference type="NCBIfam" id="TIGR00061">
    <property type="entry name" value="L21"/>
    <property type="match status" value="1"/>
</dbReference>
<dbReference type="PANTHER" id="PTHR21349">
    <property type="entry name" value="50S RIBOSOMAL PROTEIN L21"/>
    <property type="match status" value="1"/>
</dbReference>
<dbReference type="PANTHER" id="PTHR21349:SF0">
    <property type="entry name" value="LARGE RIBOSOMAL SUBUNIT PROTEIN BL21M"/>
    <property type="match status" value="1"/>
</dbReference>
<dbReference type="Pfam" id="PF00829">
    <property type="entry name" value="Ribosomal_L21p"/>
    <property type="match status" value="1"/>
</dbReference>
<dbReference type="SUPFAM" id="SSF141091">
    <property type="entry name" value="L21p-like"/>
    <property type="match status" value="1"/>
</dbReference>
<dbReference type="PROSITE" id="PS01169">
    <property type="entry name" value="RIBOSOMAL_L21"/>
    <property type="match status" value="1"/>
</dbReference>
<comment type="function">
    <text evidence="1">This protein binds to 23S rRNA in the presence of protein L20.</text>
</comment>
<comment type="subunit">
    <text evidence="1">Part of the 50S ribosomal subunit. Contacts protein L20.</text>
</comment>
<comment type="similarity">
    <text evidence="1">Belongs to the bacterial ribosomal protein bL21 family.</text>
</comment>
<reference key="1">
    <citation type="submission" date="2005-08" db="EMBL/GenBank/DDBJ databases">
        <title>Complete sequence of chromosome 1 of Nitrosospira multiformis ATCC 25196.</title>
        <authorList>
            <person name="Copeland A."/>
            <person name="Lucas S."/>
            <person name="Lapidus A."/>
            <person name="Barry K."/>
            <person name="Detter J.C."/>
            <person name="Glavina T."/>
            <person name="Hammon N."/>
            <person name="Israni S."/>
            <person name="Pitluck S."/>
            <person name="Chain P."/>
            <person name="Malfatti S."/>
            <person name="Shin M."/>
            <person name="Vergez L."/>
            <person name="Schmutz J."/>
            <person name="Larimer F."/>
            <person name="Land M."/>
            <person name="Hauser L."/>
            <person name="Kyrpides N."/>
            <person name="Lykidis A."/>
            <person name="Richardson P."/>
        </authorList>
    </citation>
    <scope>NUCLEOTIDE SEQUENCE [LARGE SCALE GENOMIC DNA]</scope>
    <source>
        <strain>ATCC 25196 / NCIMB 11849 / C 71</strain>
    </source>
</reference>
<protein>
    <recommendedName>
        <fullName evidence="1">Large ribosomal subunit protein bL21</fullName>
    </recommendedName>
    <alternativeName>
        <fullName evidence="2">50S ribosomal protein L21</fullName>
    </alternativeName>
</protein>
<organism>
    <name type="scientific">Nitrosospira multiformis (strain ATCC 25196 / NCIMB 11849 / C 71)</name>
    <dbReference type="NCBI Taxonomy" id="323848"/>
    <lineage>
        <taxon>Bacteria</taxon>
        <taxon>Pseudomonadati</taxon>
        <taxon>Pseudomonadota</taxon>
        <taxon>Betaproteobacteria</taxon>
        <taxon>Nitrosomonadales</taxon>
        <taxon>Nitrosomonadaceae</taxon>
        <taxon>Nitrosospira</taxon>
    </lineage>
</organism>